<feature type="chain" id="PRO_0000071324" description="Uncharacterized protein R695">
    <location>
        <begin position="1"/>
        <end position="147"/>
    </location>
</feature>
<feature type="transmembrane region" description="Helical" evidence="1">
    <location>
        <begin position="71"/>
        <end position="91"/>
    </location>
</feature>
<accession>Q5UNW0</accession>
<evidence type="ECO:0000255" key="1"/>
<evidence type="ECO:0000269" key="2">
    <source>
    </source>
</evidence>
<evidence type="ECO:0000305" key="3"/>
<gene>
    <name type="ordered locus">MIMI_R695</name>
</gene>
<name>YR695_MIMIV</name>
<comment type="subcellular location">
    <subcellularLocation>
        <location evidence="2">Virion</location>
    </subcellularLocation>
    <subcellularLocation>
        <location evidence="3">Host membrane</location>
        <topology evidence="3">Single-pass membrane protein</topology>
    </subcellularLocation>
</comment>
<reference key="1">
    <citation type="journal article" date="2004" name="Science">
        <title>The 1.2-megabase genome sequence of Mimivirus.</title>
        <authorList>
            <person name="Raoult D."/>
            <person name="Audic S."/>
            <person name="Robert C."/>
            <person name="Abergel C."/>
            <person name="Renesto P."/>
            <person name="Ogata H."/>
            <person name="La Scola B."/>
            <person name="Susan M."/>
            <person name="Claverie J.-M."/>
        </authorList>
    </citation>
    <scope>NUCLEOTIDE SEQUENCE [LARGE SCALE GENOMIC DNA]</scope>
    <source>
        <strain>Rowbotham-Bradford</strain>
    </source>
</reference>
<reference key="2">
    <citation type="journal article" date="2006" name="J. Virol.">
        <title>Mimivirus giant particles incorporate a large fraction of anonymous and unique gene products.</title>
        <authorList>
            <person name="Renesto P."/>
            <person name="Abergel C."/>
            <person name="Decloquement P."/>
            <person name="Moinier D."/>
            <person name="Azza S."/>
            <person name="Ogata H."/>
            <person name="Fourquet P."/>
            <person name="Gorvel J.-P."/>
            <person name="Claverie J.-M."/>
            <person name="Raoult D."/>
        </authorList>
    </citation>
    <scope>IDENTIFICATION BY MASS SPECTROMETRY [LARGE SCALE ANALYSIS]</scope>
    <scope>SUBCELLULAR LOCATION</scope>
</reference>
<protein>
    <recommendedName>
        <fullName>Uncharacterized protein R695</fullName>
    </recommendedName>
</protein>
<organism>
    <name type="scientific">Acanthamoeba polyphaga mimivirus</name>
    <name type="common">APMV</name>
    <dbReference type="NCBI Taxonomy" id="212035"/>
    <lineage>
        <taxon>Viruses</taxon>
        <taxon>Varidnaviria</taxon>
        <taxon>Bamfordvirae</taxon>
        <taxon>Nucleocytoviricota</taxon>
        <taxon>Megaviricetes</taxon>
        <taxon>Imitervirales</taxon>
        <taxon>Mimiviridae</taxon>
        <taxon>Megamimivirinae</taxon>
        <taxon>Mimivirus</taxon>
        <taxon>Mimivirus bradfordmassiliense</taxon>
    </lineage>
</organism>
<dbReference type="EMBL" id="AY653733">
    <property type="protein sequence ID" value="AAV50956.1"/>
    <property type="molecule type" value="Genomic_DNA"/>
</dbReference>
<dbReference type="SMR" id="Q5UNW0"/>
<dbReference type="KEGG" id="vg:9925347"/>
<dbReference type="OrthoDB" id="24760at10239"/>
<dbReference type="Proteomes" id="UP000001134">
    <property type="component" value="Genome"/>
</dbReference>
<dbReference type="GO" id="GO:0033644">
    <property type="term" value="C:host cell membrane"/>
    <property type="evidence" value="ECO:0007669"/>
    <property type="project" value="UniProtKB-SubCell"/>
</dbReference>
<dbReference type="GO" id="GO:0016020">
    <property type="term" value="C:membrane"/>
    <property type="evidence" value="ECO:0007669"/>
    <property type="project" value="UniProtKB-KW"/>
</dbReference>
<dbReference type="GO" id="GO:0044423">
    <property type="term" value="C:virion component"/>
    <property type="evidence" value="ECO:0007669"/>
    <property type="project" value="UniProtKB-KW"/>
</dbReference>
<proteinExistence type="evidence at protein level"/>
<organismHost>
    <name type="scientific">Acanthamoeba polyphaga</name>
    <name type="common">Amoeba</name>
    <dbReference type="NCBI Taxonomy" id="5757"/>
</organismHost>
<keyword id="KW-1043">Host membrane</keyword>
<keyword id="KW-0472">Membrane</keyword>
<keyword id="KW-1185">Reference proteome</keyword>
<keyword id="KW-0812">Transmembrane</keyword>
<keyword id="KW-1133">Transmembrane helix</keyword>
<keyword id="KW-0946">Virion</keyword>
<sequence>MATNTSSNLLTNPYTEREKKLIDEAYYRDLKYNLTSKSRWKFIGDVSETLSQICVGTSSVLAFASGFFEDIDILAFVAGTVGVGSLVLLQFSSYAMKESSERTQQVNVILTKLGLETIPDIVVEPSIIKARLQGELGEQENDVVIEV</sequence>